<dbReference type="EC" id="5.1.3.9" evidence="1"/>
<dbReference type="EMBL" id="AP006627">
    <property type="protein sequence ID" value="BAD63251.1"/>
    <property type="molecule type" value="Genomic_DNA"/>
</dbReference>
<dbReference type="RefSeq" id="WP_011245567.1">
    <property type="nucleotide sequence ID" value="NC_006582.1"/>
</dbReference>
<dbReference type="SMR" id="Q5WK54"/>
<dbReference type="STRING" id="66692.ABC0712"/>
<dbReference type="KEGG" id="bcl:ABC0712"/>
<dbReference type="eggNOG" id="COG3010">
    <property type="taxonomic scope" value="Bacteria"/>
</dbReference>
<dbReference type="HOGENOM" id="CLU_086300_1_0_9"/>
<dbReference type="OrthoDB" id="9781704at2"/>
<dbReference type="UniPathway" id="UPA00629">
    <property type="reaction ID" value="UER00682"/>
</dbReference>
<dbReference type="Proteomes" id="UP000001168">
    <property type="component" value="Chromosome"/>
</dbReference>
<dbReference type="GO" id="GO:0005829">
    <property type="term" value="C:cytosol"/>
    <property type="evidence" value="ECO:0007669"/>
    <property type="project" value="TreeGrafter"/>
</dbReference>
<dbReference type="GO" id="GO:0047465">
    <property type="term" value="F:N-acylglucosamine-6-phosphate 2-epimerase activity"/>
    <property type="evidence" value="ECO:0007669"/>
    <property type="project" value="UniProtKB-EC"/>
</dbReference>
<dbReference type="GO" id="GO:0005975">
    <property type="term" value="P:carbohydrate metabolic process"/>
    <property type="evidence" value="ECO:0007669"/>
    <property type="project" value="UniProtKB-UniRule"/>
</dbReference>
<dbReference type="GO" id="GO:0006053">
    <property type="term" value="P:N-acetylmannosamine catabolic process"/>
    <property type="evidence" value="ECO:0007669"/>
    <property type="project" value="TreeGrafter"/>
</dbReference>
<dbReference type="GO" id="GO:0019262">
    <property type="term" value="P:N-acetylneuraminate catabolic process"/>
    <property type="evidence" value="ECO:0007669"/>
    <property type="project" value="UniProtKB-UniRule"/>
</dbReference>
<dbReference type="CDD" id="cd04729">
    <property type="entry name" value="NanE"/>
    <property type="match status" value="1"/>
</dbReference>
<dbReference type="FunFam" id="3.20.20.70:FF:000035">
    <property type="entry name" value="Putative N-acetylmannosamine-6-phosphate 2-epimerase"/>
    <property type="match status" value="1"/>
</dbReference>
<dbReference type="Gene3D" id="3.20.20.70">
    <property type="entry name" value="Aldolase class I"/>
    <property type="match status" value="1"/>
</dbReference>
<dbReference type="HAMAP" id="MF_01235">
    <property type="entry name" value="ManNAc6P_epimer"/>
    <property type="match status" value="1"/>
</dbReference>
<dbReference type="InterPro" id="IPR013785">
    <property type="entry name" value="Aldolase_TIM"/>
</dbReference>
<dbReference type="InterPro" id="IPR007260">
    <property type="entry name" value="NanE"/>
</dbReference>
<dbReference type="InterPro" id="IPR011060">
    <property type="entry name" value="RibuloseP-bd_barrel"/>
</dbReference>
<dbReference type="NCBIfam" id="NF002231">
    <property type="entry name" value="PRK01130.1"/>
    <property type="match status" value="1"/>
</dbReference>
<dbReference type="PANTHER" id="PTHR36204">
    <property type="entry name" value="N-ACETYLMANNOSAMINE-6-PHOSPHATE 2-EPIMERASE-RELATED"/>
    <property type="match status" value="1"/>
</dbReference>
<dbReference type="PANTHER" id="PTHR36204:SF1">
    <property type="entry name" value="N-ACETYLMANNOSAMINE-6-PHOSPHATE 2-EPIMERASE-RELATED"/>
    <property type="match status" value="1"/>
</dbReference>
<dbReference type="Pfam" id="PF04131">
    <property type="entry name" value="NanE"/>
    <property type="match status" value="1"/>
</dbReference>
<dbReference type="SUPFAM" id="SSF51366">
    <property type="entry name" value="Ribulose-phoshate binding barrel"/>
    <property type="match status" value="1"/>
</dbReference>
<proteinExistence type="inferred from homology"/>
<keyword id="KW-0119">Carbohydrate metabolism</keyword>
<keyword id="KW-0413">Isomerase</keyword>
<keyword id="KW-1185">Reference proteome</keyword>
<organism>
    <name type="scientific">Shouchella clausii (strain KSM-K16)</name>
    <name type="common">Alkalihalobacillus clausii</name>
    <dbReference type="NCBI Taxonomy" id="66692"/>
    <lineage>
        <taxon>Bacteria</taxon>
        <taxon>Bacillati</taxon>
        <taxon>Bacillota</taxon>
        <taxon>Bacilli</taxon>
        <taxon>Bacillales</taxon>
        <taxon>Bacillaceae</taxon>
        <taxon>Shouchella</taxon>
    </lineage>
</organism>
<reference key="1">
    <citation type="submission" date="2003-10" db="EMBL/GenBank/DDBJ databases">
        <title>The complete genome sequence of the alkaliphilic Bacillus clausii KSM-K16.</title>
        <authorList>
            <person name="Takaki Y."/>
            <person name="Kageyama Y."/>
            <person name="Shimamura S."/>
            <person name="Suzuki H."/>
            <person name="Nishi S."/>
            <person name="Hatada Y."/>
            <person name="Kawai S."/>
            <person name="Ito S."/>
            <person name="Horikoshi K."/>
        </authorList>
    </citation>
    <scope>NUCLEOTIDE SEQUENCE [LARGE SCALE GENOMIC DNA]</scope>
    <source>
        <strain>KSM-K16</strain>
    </source>
</reference>
<feature type="chain" id="PRO_0000179765" description="Putative N-acetylmannosamine-6-phosphate 2-epimerase">
    <location>
        <begin position="1"/>
        <end position="227"/>
    </location>
</feature>
<comment type="function">
    <text evidence="1">Converts N-acetylmannosamine-6-phosphate (ManNAc-6-P) to N-acetylglucosamine-6-phosphate (GlcNAc-6-P).</text>
</comment>
<comment type="catalytic activity">
    <reaction evidence="1">
        <text>an N-acyl-D-glucosamine 6-phosphate = an N-acyl-D-mannosamine 6-phosphate</text>
        <dbReference type="Rhea" id="RHEA:23932"/>
        <dbReference type="ChEBI" id="CHEBI:57599"/>
        <dbReference type="ChEBI" id="CHEBI:57666"/>
        <dbReference type="EC" id="5.1.3.9"/>
    </reaction>
</comment>
<comment type="pathway">
    <text evidence="1">Amino-sugar metabolism; N-acetylneuraminate degradation; D-fructose 6-phosphate from N-acetylneuraminate: step 3/5.</text>
</comment>
<comment type="similarity">
    <text evidence="1">Belongs to the NanE family.</text>
</comment>
<evidence type="ECO:0000255" key="1">
    <source>
        <dbReference type="HAMAP-Rule" id="MF_01235"/>
    </source>
</evidence>
<sequence length="227" mass="24270">MHAVLKKMKNKLVVSCQALEEEPLHSSFIMGRMALAAKQGGASGIRANSKEDILEIKSTVDLPVIGIVKRHYPGSDVYITATMTEVDELMEANVDMIAMDATKQKRPKQSLAEMVAAIRNQYPSVALMADVSTLEEAIEADRLGFDCISTTLVGYTAYTAGASASDNDFALLKEMVQAVKAPVIAEGKMNTPALAKCALKAGAHSVVVGGAITRPQQITKTFVEALQ</sequence>
<gene>
    <name evidence="1" type="primary">nanE</name>
    <name type="ordered locus">ABC0712</name>
</gene>
<accession>Q5WK54</accession>
<name>NANE_SHOC1</name>
<protein>
    <recommendedName>
        <fullName evidence="1">Putative N-acetylmannosamine-6-phosphate 2-epimerase</fullName>
        <ecNumber evidence="1">5.1.3.9</ecNumber>
    </recommendedName>
    <alternativeName>
        <fullName evidence="1">ManNAc-6-P epimerase</fullName>
    </alternativeName>
</protein>